<name>TRUB_BACAH</name>
<dbReference type="EC" id="5.4.99.25" evidence="1"/>
<dbReference type="EMBL" id="CP000485">
    <property type="protein sequence ID" value="ABK86674.1"/>
    <property type="molecule type" value="Genomic_DNA"/>
</dbReference>
<dbReference type="RefSeq" id="WP_000399346.1">
    <property type="nucleotide sequence ID" value="NC_008600.1"/>
</dbReference>
<dbReference type="SMR" id="A0RHI1"/>
<dbReference type="KEGG" id="btl:BALH_3438"/>
<dbReference type="HOGENOM" id="CLU_032087_0_1_9"/>
<dbReference type="GO" id="GO:0003723">
    <property type="term" value="F:RNA binding"/>
    <property type="evidence" value="ECO:0007669"/>
    <property type="project" value="InterPro"/>
</dbReference>
<dbReference type="GO" id="GO:0160148">
    <property type="term" value="F:tRNA pseudouridine(55) synthase activity"/>
    <property type="evidence" value="ECO:0007669"/>
    <property type="project" value="UniProtKB-EC"/>
</dbReference>
<dbReference type="GO" id="GO:1990481">
    <property type="term" value="P:mRNA pseudouridine synthesis"/>
    <property type="evidence" value="ECO:0007669"/>
    <property type="project" value="TreeGrafter"/>
</dbReference>
<dbReference type="GO" id="GO:0031119">
    <property type="term" value="P:tRNA pseudouridine synthesis"/>
    <property type="evidence" value="ECO:0007669"/>
    <property type="project" value="UniProtKB-UniRule"/>
</dbReference>
<dbReference type="CDD" id="cd02573">
    <property type="entry name" value="PseudoU_synth_EcTruB"/>
    <property type="match status" value="1"/>
</dbReference>
<dbReference type="FunFam" id="3.30.2350.10:FF:000011">
    <property type="entry name" value="tRNA pseudouridine synthase B"/>
    <property type="match status" value="1"/>
</dbReference>
<dbReference type="Gene3D" id="3.30.2350.10">
    <property type="entry name" value="Pseudouridine synthase"/>
    <property type="match status" value="1"/>
</dbReference>
<dbReference type="HAMAP" id="MF_01080">
    <property type="entry name" value="TruB_bact"/>
    <property type="match status" value="1"/>
</dbReference>
<dbReference type="InterPro" id="IPR020103">
    <property type="entry name" value="PsdUridine_synth_cat_dom_sf"/>
</dbReference>
<dbReference type="InterPro" id="IPR002501">
    <property type="entry name" value="PsdUridine_synth_N"/>
</dbReference>
<dbReference type="InterPro" id="IPR014780">
    <property type="entry name" value="tRNA_psdUridine_synth_TruB"/>
</dbReference>
<dbReference type="InterPro" id="IPR032819">
    <property type="entry name" value="TruB_C"/>
</dbReference>
<dbReference type="NCBIfam" id="TIGR00431">
    <property type="entry name" value="TruB"/>
    <property type="match status" value="1"/>
</dbReference>
<dbReference type="PANTHER" id="PTHR13767:SF2">
    <property type="entry name" value="PSEUDOURIDYLATE SYNTHASE TRUB1"/>
    <property type="match status" value="1"/>
</dbReference>
<dbReference type="PANTHER" id="PTHR13767">
    <property type="entry name" value="TRNA-PSEUDOURIDINE SYNTHASE"/>
    <property type="match status" value="1"/>
</dbReference>
<dbReference type="Pfam" id="PF16198">
    <property type="entry name" value="TruB_C_2"/>
    <property type="match status" value="1"/>
</dbReference>
<dbReference type="Pfam" id="PF01509">
    <property type="entry name" value="TruB_N"/>
    <property type="match status" value="1"/>
</dbReference>
<dbReference type="SUPFAM" id="SSF55120">
    <property type="entry name" value="Pseudouridine synthase"/>
    <property type="match status" value="1"/>
</dbReference>
<sequence>MEGVVLLHKPKGMTSHDCVFKLRKILREKRIGHTGTLDPDVTGVLPICVGRATKIAQFLTSETKTYEGEVTLGFSTTTEDASGEVVETKHVDRVITRKEVEGALAALTGTIEQMPPMFSAVKVNGKKLYEYARAGQEVERPVRTITIHEFVLLDDREVFEGETISFRFRVTCSKGTYVRTLAVMIGEKLGFPSHMSHLVRTASGEFLLEDCISFEEIEENVQNGTVESIFISIDEALSKFPKMVVDEKQAEKIKNGMFLKNELQITAPFITVFDKNDRCLAIYEHHPKHPGMLKPMKVLVNNQELKL</sequence>
<feature type="chain" id="PRO_1000084547" description="tRNA pseudouridine synthase B">
    <location>
        <begin position="1"/>
        <end position="307"/>
    </location>
</feature>
<feature type="active site" description="Nucleophile" evidence="1">
    <location>
        <position position="38"/>
    </location>
</feature>
<reference key="1">
    <citation type="journal article" date="2007" name="J. Bacteriol.">
        <title>The complete genome sequence of Bacillus thuringiensis Al Hakam.</title>
        <authorList>
            <person name="Challacombe J.F."/>
            <person name="Altherr M.R."/>
            <person name="Xie G."/>
            <person name="Bhotika S.S."/>
            <person name="Brown N."/>
            <person name="Bruce D."/>
            <person name="Campbell C.S."/>
            <person name="Campbell M.L."/>
            <person name="Chen J."/>
            <person name="Chertkov O."/>
            <person name="Cleland C."/>
            <person name="Dimitrijevic M."/>
            <person name="Doggett N.A."/>
            <person name="Fawcett J.J."/>
            <person name="Glavina T."/>
            <person name="Goodwin L.A."/>
            <person name="Green L.D."/>
            <person name="Han C.S."/>
            <person name="Hill K.K."/>
            <person name="Hitchcock P."/>
            <person name="Jackson P.J."/>
            <person name="Keim P."/>
            <person name="Kewalramani A.R."/>
            <person name="Longmire J."/>
            <person name="Lucas S."/>
            <person name="Malfatti S."/>
            <person name="Martinez D."/>
            <person name="McMurry K."/>
            <person name="Meincke L.J."/>
            <person name="Misra M."/>
            <person name="Moseman B.L."/>
            <person name="Mundt M."/>
            <person name="Munk A.C."/>
            <person name="Okinaka R.T."/>
            <person name="Parson-Quintana B."/>
            <person name="Reilly L.P."/>
            <person name="Richardson P."/>
            <person name="Robinson D.L."/>
            <person name="Saunders E."/>
            <person name="Tapia R."/>
            <person name="Tesmer J.G."/>
            <person name="Thayer N."/>
            <person name="Thompson L.S."/>
            <person name="Tice H."/>
            <person name="Ticknor L.O."/>
            <person name="Wills P.L."/>
            <person name="Gilna P."/>
            <person name="Brettin T.S."/>
        </authorList>
    </citation>
    <scope>NUCLEOTIDE SEQUENCE [LARGE SCALE GENOMIC DNA]</scope>
    <source>
        <strain>Al Hakam</strain>
    </source>
</reference>
<organism>
    <name type="scientific">Bacillus thuringiensis (strain Al Hakam)</name>
    <dbReference type="NCBI Taxonomy" id="412694"/>
    <lineage>
        <taxon>Bacteria</taxon>
        <taxon>Bacillati</taxon>
        <taxon>Bacillota</taxon>
        <taxon>Bacilli</taxon>
        <taxon>Bacillales</taxon>
        <taxon>Bacillaceae</taxon>
        <taxon>Bacillus</taxon>
        <taxon>Bacillus cereus group</taxon>
    </lineage>
</organism>
<keyword id="KW-0413">Isomerase</keyword>
<keyword id="KW-0819">tRNA processing</keyword>
<protein>
    <recommendedName>
        <fullName evidence="1">tRNA pseudouridine synthase B</fullName>
        <ecNumber evidence="1">5.4.99.25</ecNumber>
    </recommendedName>
    <alternativeName>
        <fullName evidence="1">tRNA pseudouridine(55) synthase</fullName>
        <shortName evidence="1">Psi55 synthase</shortName>
    </alternativeName>
    <alternativeName>
        <fullName evidence="1">tRNA pseudouridylate synthase</fullName>
    </alternativeName>
    <alternativeName>
        <fullName evidence="1">tRNA-uridine isomerase</fullName>
    </alternativeName>
</protein>
<comment type="function">
    <text evidence="1">Responsible for synthesis of pseudouridine from uracil-55 in the psi GC loop of transfer RNAs.</text>
</comment>
<comment type="catalytic activity">
    <reaction evidence="1">
        <text>uridine(55) in tRNA = pseudouridine(55) in tRNA</text>
        <dbReference type="Rhea" id="RHEA:42532"/>
        <dbReference type="Rhea" id="RHEA-COMP:10101"/>
        <dbReference type="Rhea" id="RHEA-COMP:10102"/>
        <dbReference type="ChEBI" id="CHEBI:65314"/>
        <dbReference type="ChEBI" id="CHEBI:65315"/>
        <dbReference type="EC" id="5.4.99.25"/>
    </reaction>
</comment>
<comment type="similarity">
    <text evidence="1">Belongs to the pseudouridine synthase TruB family. Type 1 subfamily.</text>
</comment>
<proteinExistence type="inferred from homology"/>
<evidence type="ECO:0000255" key="1">
    <source>
        <dbReference type="HAMAP-Rule" id="MF_01080"/>
    </source>
</evidence>
<gene>
    <name evidence="1" type="primary">truB</name>
    <name type="ordered locus">BALH_3438</name>
</gene>
<accession>A0RHI1</accession>